<reference key="1">
    <citation type="journal article" date="2000" name="Nature">
        <title>DNA sequence of both chromosomes of the cholera pathogen Vibrio cholerae.</title>
        <authorList>
            <person name="Heidelberg J.F."/>
            <person name="Eisen J.A."/>
            <person name="Nelson W.C."/>
            <person name="Clayton R.A."/>
            <person name="Gwinn M.L."/>
            <person name="Dodson R.J."/>
            <person name="Haft D.H."/>
            <person name="Hickey E.K."/>
            <person name="Peterson J.D."/>
            <person name="Umayam L.A."/>
            <person name="Gill S.R."/>
            <person name="Nelson K.E."/>
            <person name="Read T.D."/>
            <person name="Tettelin H."/>
            <person name="Richardson D.L."/>
            <person name="Ermolaeva M.D."/>
            <person name="Vamathevan J.J."/>
            <person name="Bass S."/>
            <person name="Qin H."/>
            <person name="Dragoi I."/>
            <person name="Sellers P."/>
            <person name="McDonald L.A."/>
            <person name="Utterback T.R."/>
            <person name="Fleischmann R.D."/>
            <person name="Nierman W.C."/>
            <person name="White O."/>
            <person name="Salzberg S.L."/>
            <person name="Smith H.O."/>
            <person name="Colwell R.R."/>
            <person name="Mekalanos J.J."/>
            <person name="Venter J.C."/>
            <person name="Fraser C.M."/>
        </authorList>
    </citation>
    <scope>NUCLEOTIDE SEQUENCE [LARGE SCALE GENOMIC DNA]</scope>
    <source>
        <strain>ATCC 39315 / El Tor Inaba N16961</strain>
    </source>
</reference>
<organism>
    <name type="scientific">Vibrio cholerae serotype O1 (strain ATCC 39315 / El Tor Inaba N16961)</name>
    <dbReference type="NCBI Taxonomy" id="243277"/>
    <lineage>
        <taxon>Bacteria</taxon>
        <taxon>Pseudomonadati</taxon>
        <taxon>Pseudomonadota</taxon>
        <taxon>Gammaproteobacteria</taxon>
        <taxon>Vibrionales</taxon>
        <taxon>Vibrionaceae</taxon>
        <taxon>Vibrio</taxon>
    </lineage>
</organism>
<gene>
    <name evidence="1" type="primary">rimO</name>
    <name type="ordered locus">VC_2620</name>
</gene>
<proteinExistence type="inferred from homology"/>
<protein>
    <recommendedName>
        <fullName evidence="1">Ribosomal protein uS12 methylthiotransferase RimO</fullName>
        <shortName evidence="1">uS12 MTTase</shortName>
        <shortName evidence="1">uS12 methylthiotransferase</shortName>
        <ecNumber evidence="1">2.8.4.4</ecNumber>
    </recommendedName>
    <alternativeName>
        <fullName evidence="1">Ribosomal protein uS12 (aspartate-C(3))-methylthiotransferase</fullName>
    </alternativeName>
    <alternativeName>
        <fullName evidence="1">Ribosome maturation factor RimO</fullName>
    </alternativeName>
</protein>
<comment type="function">
    <text evidence="1">Catalyzes the methylthiolation of an aspartic acid residue of ribosomal protein uS12.</text>
</comment>
<comment type="catalytic activity">
    <reaction evidence="1">
        <text>L-aspartate(89)-[ribosomal protein uS12]-hydrogen + (sulfur carrier)-SH + AH2 + 2 S-adenosyl-L-methionine = 3-methylsulfanyl-L-aspartate(89)-[ribosomal protein uS12]-hydrogen + (sulfur carrier)-H + 5'-deoxyadenosine + L-methionine + A + S-adenosyl-L-homocysteine + 2 H(+)</text>
        <dbReference type="Rhea" id="RHEA:37087"/>
        <dbReference type="Rhea" id="RHEA-COMP:10460"/>
        <dbReference type="Rhea" id="RHEA-COMP:10461"/>
        <dbReference type="Rhea" id="RHEA-COMP:14737"/>
        <dbReference type="Rhea" id="RHEA-COMP:14739"/>
        <dbReference type="ChEBI" id="CHEBI:13193"/>
        <dbReference type="ChEBI" id="CHEBI:15378"/>
        <dbReference type="ChEBI" id="CHEBI:17319"/>
        <dbReference type="ChEBI" id="CHEBI:17499"/>
        <dbReference type="ChEBI" id="CHEBI:29917"/>
        <dbReference type="ChEBI" id="CHEBI:29961"/>
        <dbReference type="ChEBI" id="CHEBI:57844"/>
        <dbReference type="ChEBI" id="CHEBI:57856"/>
        <dbReference type="ChEBI" id="CHEBI:59789"/>
        <dbReference type="ChEBI" id="CHEBI:64428"/>
        <dbReference type="ChEBI" id="CHEBI:73599"/>
        <dbReference type="EC" id="2.8.4.4"/>
    </reaction>
</comment>
<comment type="cofactor">
    <cofactor evidence="1">
        <name>[4Fe-4S] cluster</name>
        <dbReference type="ChEBI" id="CHEBI:49883"/>
    </cofactor>
    <text evidence="1">Binds 2 [4Fe-4S] clusters. One cluster is coordinated with 3 cysteines and an exchangeable S-adenosyl-L-methionine.</text>
</comment>
<comment type="subcellular location">
    <subcellularLocation>
        <location evidence="1">Cytoplasm</location>
    </subcellularLocation>
</comment>
<comment type="similarity">
    <text evidence="1">Belongs to the methylthiotransferase family. RimO subfamily.</text>
</comment>
<sequence length="470" mass="52479">MTVQTFTPNQTTTLETAKKTIAEQSQNSQTTGNKIGFVSLGCPKNLVDSERILTQLRTEGYEIVNSYHDSDVVIVNTCGFIDSAVQESLDTIGEALKENGKVIVTGCLGAREDEIRQVHPNVLGITGPHAYQNVLEHVHQYAPKPAHNPFTSLVPDHGVKLTPKHYAYLKISEGCNHRCTFCIIPSMRGDLVSRPVGEIIGEAERLKNAGVKELLVISQDTSAYGVDTKHSLGFANGSPVRHNIKALSEELGKMGIWVRLHYVYPYPHVDEIIPLMAEGKVLPYLDIPFQHASPRVLKMMKRPGQAERTLERIKKWREICPELVIRSTFIVGFPGETEEDFQILLDWLKEAQLDRVGCFKYSPVEGAAANEIEDQIPEDVKQDRFERFMLVQQEISAAKLQKRIGSTMQVLIDEVDEEGAIGRTYADAPEIDGLVYLNGETNLKPGELVNVVIEHADEYDLWGSILHDAQ</sequence>
<dbReference type="EC" id="2.8.4.4" evidence="1"/>
<dbReference type="EMBL" id="AE003852">
    <property type="protein sequence ID" value="AAF95761.1"/>
    <property type="molecule type" value="Genomic_DNA"/>
</dbReference>
<dbReference type="PIR" id="H82054">
    <property type="entry name" value="H82054"/>
</dbReference>
<dbReference type="RefSeq" id="NP_232248.1">
    <property type="nucleotide sequence ID" value="NC_002505.1"/>
</dbReference>
<dbReference type="RefSeq" id="WP_000218156.1">
    <property type="nucleotide sequence ID" value="NZ_LT906614.1"/>
</dbReference>
<dbReference type="SMR" id="Q9KNW0"/>
<dbReference type="STRING" id="243277.VC_2620"/>
<dbReference type="DNASU" id="2615637"/>
<dbReference type="EnsemblBacteria" id="AAF95761">
    <property type="protein sequence ID" value="AAF95761"/>
    <property type="gene ID" value="VC_2620"/>
</dbReference>
<dbReference type="KEGG" id="vch:VC_2620"/>
<dbReference type="PATRIC" id="fig|243277.26.peg.2498"/>
<dbReference type="eggNOG" id="COG0621">
    <property type="taxonomic scope" value="Bacteria"/>
</dbReference>
<dbReference type="HOGENOM" id="CLU_018697_0_0_6"/>
<dbReference type="Proteomes" id="UP000000584">
    <property type="component" value="Chromosome 1"/>
</dbReference>
<dbReference type="GO" id="GO:0005829">
    <property type="term" value="C:cytosol"/>
    <property type="evidence" value="ECO:0000318"/>
    <property type="project" value="GO_Central"/>
</dbReference>
<dbReference type="GO" id="GO:0051539">
    <property type="term" value="F:4 iron, 4 sulfur cluster binding"/>
    <property type="evidence" value="ECO:0000318"/>
    <property type="project" value="GO_Central"/>
</dbReference>
<dbReference type="GO" id="GO:0035599">
    <property type="term" value="F:aspartic acid methylthiotransferase activity"/>
    <property type="evidence" value="ECO:0000318"/>
    <property type="project" value="GO_Central"/>
</dbReference>
<dbReference type="GO" id="GO:0046872">
    <property type="term" value="F:metal ion binding"/>
    <property type="evidence" value="ECO:0007669"/>
    <property type="project" value="UniProtKB-KW"/>
</dbReference>
<dbReference type="GO" id="GO:0103039">
    <property type="term" value="F:protein methylthiotransferase activity"/>
    <property type="evidence" value="ECO:0007669"/>
    <property type="project" value="UniProtKB-EC"/>
</dbReference>
<dbReference type="GO" id="GO:0006400">
    <property type="term" value="P:tRNA modification"/>
    <property type="evidence" value="ECO:0007669"/>
    <property type="project" value="InterPro"/>
</dbReference>
<dbReference type="CDD" id="cd01335">
    <property type="entry name" value="Radical_SAM"/>
    <property type="match status" value="1"/>
</dbReference>
<dbReference type="FunFam" id="2.40.50.140:FF:000060">
    <property type="entry name" value="Ribosomal protein S12 methylthiotransferase RimO"/>
    <property type="match status" value="1"/>
</dbReference>
<dbReference type="FunFam" id="3.40.50.12160:FF:000002">
    <property type="entry name" value="Ribosomal protein S12 methylthiotransferase RimO"/>
    <property type="match status" value="1"/>
</dbReference>
<dbReference type="FunFam" id="3.80.30.20:FF:000001">
    <property type="entry name" value="tRNA-2-methylthio-N(6)-dimethylallyladenosine synthase 2"/>
    <property type="match status" value="1"/>
</dbReference>
<dbReference type="Gene3D" id="3.40.50.12160">
    <property type="entry name" value="Methylthiotransferase, N-terminal domain"/>
    <property type="match status" value="1"/>
</dbReference>
<dbReference type="Gene3D" id="2.40.50.140">
    <property type="entry name" value="Nucleic acid-binding proteins"/>
    <property type="match status" value="1"/>
</dbReference>
<dbReference type="Gene3D" id="3.80.30.20">
    <property type="entry name" value="tm_1862 like domain"/>
    <property type="match status" value="1"/>
</dbReference>
<dbReference type="HAMAP" id="MF_01865">
    <property type="entry name" value="MTTase_RimO"/>
    <property type="match status" value="1"/>
</dbReference>
<dbReference type="InterPro" id="IPR006638">
    <property type="entry name" value="Elp3/MiaA/NifB-like_rSAM"/>
</dbReference>
<dbReference type="InterPro" id="IPR005839">
    <property type="entry name" value="Methylthiotransferase"/>
</dbReference>
<dbReference type="InterPro" id="IPR020612">
    <property type="entry name" value="Methylthiotransferase_CS"/>
</dbReference>
<dbReference type="InterPro" id="IPR013848">
    <property type="entry name" value="Methylthiotransferase_N"/>
</dbReference>
<dbReference type="InterPro" id="IPR038135">
    <property type="entry name" value="Methylthiotransferase_N_sf"/>
</dbReference>
<dbReference type="InterPro" id="IPR012340">
    <property type="entry name" value="NA-bd_OB-fold"/>
</dbReference>
<dbReference type="InterPro" id="IPR005840">
    <property type="entry name" value="Ribosomal_uS12_MeSTrfase_RimO"/>
</dbReference>
<dbReference type="InterPro" id="IPR007197">
    <property type="entry name" value="rSAM"/>
</dbReference>
<dbReference type="InterPro" id="IPR023404">
    <property type="entry name" value="rSAM_horseshoe"/>
</dbReference>
<dbReference type="InterPro" id="IPR002792">
    <property type="entry name" value="TRAM_dom"/>
</dbReference>
<dbReference type="NCBIfam" id="TIGR01125">
    <property type="entry name" value="30S ribosomal protein S12 methylthiotransferase RimO"/>
    <property type="match status" value="1"/>
</dbReference>
<dbReference type="NCBIfam" id="TIGR00089">
    <property type="entry name" value="MiaB/RimO family radical SAM methylthiotransferase"/>
    <property type="match status" value="1"/>
</dbReference>
<dbReference type="PANTHER" id="PTHR43837">
    <property type="entry name" value="RIBOSOMAL PROTEIN S12 METHYLTHIOTRANSFERASE RIMO"/>
    <property type="match status" value="1"/>
</dbReference>
<dbReference type="PANTHER" id="PTHR43837:SF1">
    <property type="entry name" value="RIBOSOMAL PROTEIN US12 METHYLTHIOTRANSFERASE RIMO"/>
    <property type="match status" value="1"/>
</dbReference>
<dbReference type="Pfam" id="PF04055">
    <property type="entry name" value="Radical_SAM"/>
    <property type="match status" value="1"/>
</dbReference>
<dbReference type="Pfam" id="PF18693">
    <property type="entry name" value="TRAM_2"/>
    <property type="match status" value="1"/>
</dbReference>
<dbReference type="Pfam" id="PF00919">
    <property type="entry name" value="UPF0004"/>
    <property type="match status" value="1"/>
</dbReference>
<dbReference type="SFLD" id="SFLDG01082">
    <property type="entry name" value="B12-binding_domain_containing"/>
    <property type="match status" value="1"/>
</dbReference>
<dbReference type="SFLD" id="SFLDS00029">
    <property type="entry name" value="Radical_SAM"/>
    <property type="match status" value="1"/>
</dbReference>
<dbReference type="SFLD" id="SFLDF00274">
    <property type="entry name" value="ribosomal_protein_S12_methylth"/>
    <property type="match status" value="1"/>
</dbReference>
<dbReference type="SMART" id="SM00729">
    <property type="entry name" value="Elp3"/>
    <property type="match status" value="1"/>
</dbReference>
<dbReference type="SUPFAM" id="SSF102114">
    <property type="entry name" value="Radical SAM enzymes"/>
    <property type="match status" value="1"/>
</dbReference>
<dbReference type="PROSITE" id="PS51449">
    <property type="entry name" value="MTTASE_N"/>
    <property type="match status" value="1"/>
</dbReference>
<dbReference type="PROSITE" id="PS01278">
    <property type="entry name" value="MTTASE_RADICAL"/>
    <property type="match status" value="1"/>
</dbReference>
<dbReference type="PROSITE" id="PS51918">
    <property type="entry name" value="RADICAL_SAM"/>
    <property type="match status" value="1"/>
</dbReference>
<dbReference type="PROSITE" id="PS50926">
    <property type="entry name" value="TRAM"/>
    <property type="match status" value="1"/>
</dbReference>
<feature type="chain" id="PRO_0000375063" description="Ribosomal protein uS12 methylthiotransferase RimO">
    <location>
        <begin position="1"/>
        <end position="470"/>
    </location>
</feature>
<feature type="domain" description="MTTase N-terminal" evidence="1">
    <location>
        <begin position="33"/>
        <end position="143"/>
    </location>
</feature>
<feature type="domain" description="Radical SAM core" evidence="2">
    <location>
        <begin position="161"/>
        <end position="398"/>
    </location>
</feature>
<feature type="domain" description="TRAM" evidence="1">
    <location>
        <begin position="401"/>
        <end position="467"/>
    </location>
</feature>
<feature type="binding site" evidence="1">
    <location>
        <position position="42"/>
    </location>
    <ligand>
        <name>[4Fe-4S] cluster</name>
        <dbReference type="ChEBI" id="CHEBI:49883"/>
        <label>1</label>
    </ligand>
</feature>
<feature type="binding site" evidence="1">
    <location>
        <position position="78"/>
    </location>
    <ligand>
        <name>[4Fe-4S] cluster</name>
        <dbReference type="ChEBI" id="CHEBI:49883"/>
        <label>1</label>
    </ligand>
</feature>
<feature type="binding site" evidence="1">
    <location>
        <position position="107"/>
    </location>
    <ligand>
        <name>[4Fe-4S] cluster</name>
        <dbReference type="ChEBI" id="CHEBI:49883"/>
        <label>1</label>
    </ligand>
</feature>
<feature type="binding site" evidence="1">
    <location>
        <position position="175"/>
    </location>
    <ligand>
        <name>[4Fe-4S] cluster</name>
        <dbReference type="ChEBI" id="CHEBI:49883"/>
        <label>2</label>
        <note>4Fe-4S-S-AdoMet</note>
    </ligand>
</feature>
<feature type="binding site" evidence="1">
    <location>
        <position position="179"/>
    </location>
    <ligand>
        <name>[4Fe-4S] cluster</name>
        <dbReference type="ChEBI" id="CHEBI:49883"/>
        <label>2</label>
        <note>4Fe-4S-S-AdoMet</note>
    </ligand>
</feature>
<feature type="binding site" evidence="1">
    <location>
        <position position="182"/>
    </location>
    <ligand>
        <name>[4Fe-4S] cluster</name>
        <dbReference type="ChEBI" id="CHEBI:49883"/>
        <label>2</label>
        <note>4Fe-4S-S-AdoMet</note>
    </ligand>
</feature>
<accession>Q9KNW0</accession>
<name>RIMO_VIBCH</name>
<keyword id="KW-0004">4Fe-4S</keyword>
<keyword id="KW-0963">Cytoplasm</keyword>
<keyword id="KW-0408">Iron</keyword>
<keyword id="KW-0411">Iron-sulfur</keyword>
<keyword id="KW-0479">Metal-binding</keyword>
<keyword id="KW-1185">Reference proteome</keyword>
<keyword id="KW-0949">S-adenosyl-L-methionine</keyword>
<keyword id="KW-0808">Transferase</keyword>
<evidence type="ECO:0000255" key="1">
    <source>
        <dbReference type="HAMAP-Rule" id="MF_01865"/>
    </source>
</evidence>
<evidence type="ECO:0000255" key="2">
    <source>
        <dbReference type="PROSITE-ProRule" id="PRU01266"/>
    </source>
</evidence>